<feature type="chain" id="PRO_0000386683" description="Ribosomal RNA small subunit methyltransferase H">
    <location>
        <begin position="1"/>
        <end position="313"/>
    </location>
</feature>
<feature type="region of interest" description="Disordered" evidence="2">
    <location>
        <begin position="290"/>
        <end position="313"/>
    </location>
</feature>
<feature type="compositionally biased region" description="Basic residues" evidence="2">
    <location>
        <begin position="301"/>
        <end position="313"/>
    </location>
</feature>
<feature type="binding site" evidence="1">
    <location>
        <begin position="48"/>
        <end position="50"/>
    </location>
    <ligand>
        <name>S-adenosyl-L-methionine</name>
        <dbReference type="ChEBI" id="CHEBI:59789"/>
    </ligand>
</feature>
<feature type="binding site" evidence="1">
    <location>
        <position position="68"/>
    </location>
    <ligand>
        <name>S-adenosyl-L-methionine</name>
        <dbReference type="ChEBI" id="CHEBI:59789"/>
    </ligand>
</feature>
<feature type="binding site" evidence="1">
    <location>
        <position position="102"/>
    </location>
    <ligand>
        <name>S-adenosyl-L-methionine</name>
        <dbReference type="ChEBI" id="CHEBI:59789"/>
    </ligand>
</feature>
<feature type="binding site" evidence="1">
    <location>
        <position position="120"/>
    </location>
    <ligand>
        <name>S-adenosyl-L-methionine</name>
        <dbReference type="ChEBI" id="CHEBI:59789"/>
    </ligand>
</feature>
<feature type="binding site" evidence="1">
    <location>
        <position position="127"/>
    </location>
    <ligand>
        <name>S-adenosyl-L-methionine</name>
        <dbReference type="ChEBI" id="CHEBI:59789"/>
    </ligand>
</feature>
<dbReference type="EC" id="2.1.1.199" evidence="1"/>
<dbReference type="EMBL" id="CP000360">
    <property type="protein sequence ID" value="ABF42639.1"/>
    <property type="molecule type" value="Genomic_DNA"/>
</dbReference>
<dbReference type="RefSeq" id="WP_011524438.1">
    <property type="nucleotide sequence ID" value="NC_008009.1"/>
</dbReference>
<dbReference type="SMR" id="Q1IKG1"/>
<dbReference type="STRING" id="204669.Acid345_3638"/>
<dbReference type="EnsemblBacteria" id="ABF42639">
    <property type="protein sequence ID" value="ABF42639"/>
    <property type="gene ID" value="Acid345_3638"/>
</dbReference>
<dbReference type="KEGG" id="aba:Acid345_3638"/>
<dbReference type="eggNOG" id="COG0275">
    <property type="taxonomic scope" value="Bacteria"/>
</dbReference>
<dbReference type="HOGENOM" id="CLU_038422_2_0_0"/>
<dbReference type="OrthoDB" id="9806637at2"/>
<dbReference type="Proteomes" id="UP000002432">
    <property type="component" value="Chromosome"/>
</dbReference>
<dbReference type="GO" id="GO:0005737">
    <property type="term" value="C:cytoplasm"/>
    <property type="evidence" value="ECO:0007669"/>
    <property type="project" value="UniProtKB-SubCell"/>
</dbReference>
<dbReference type="GO" id="GO:0071424">
    <property type="term" value="F:rRNA (cytosine-N4-)-methyltransferase activity"/>
    <property type="evidence" value="ECO:0007669"/>
    <property type="project" value="UniProtKB-UniRule"/>
</dbReference>
<dbReference type="GO" id="GO:0070475">
    <property type="term" value="P:rRNA base methylation"/>
    <property type="evidence" value="ECO:0007669"/>
    <property type="project" value="UniProtKB-UniRule"/>
</dbReference>
<dbReference type="Gene3D" id="1.10.150.170">
    <property type="entry name" value="Putative methyltransferase TM0872, insert domain"/>
    <property type="match status" value="1"/>
</dbReference>
<dbReference type="Gene3D" id="3.40.50.150">
    <property type="entry name" value="Vaccinia Virus protein VP39"/>
    <property type="match status" value="1"/>
</dbReference>
<dbReference type="HAMAP" id="MF_01007">
    <property type="entry name" value="16SrRNA_methyltr_H"/>
    <property type="match status" value="1"/>
</dbReference>
<dbReference type="InterPro" id="IPR002903">
    <property type="entry name" value="RsmH"/>
</dbReference>
<dbReference type="InterPro" id="IPR023397">
    <property type="entry name" value="SAM-dep_MeTrfase_MraW_recog"/>
</dbReference>
<dbReference type="InterPro" id="IPR029063">
    <property type="entry name" value="SAM-dependent_MTases_sf"/>
</dbReference>
<dbReference type="NCBIfam" id="TIGR00006">
    <property type="entry name" value="16S rRNA (cytosine(1402)-N(4))-methyltransferase RsmH"/>
    <property type="match status" value="1"/>
</dbReference>
<dbReference type="PANTHER" id="PTHR11265:SF0">
    <property type="entry name" value="12S RRNA N4-METHYLCYTIDINE METHYLTRANSFERASE"/>
    <property type="match status" value="1"/>
</dbReference>
<dbReference type="PANTHER" id="PTHR11265">
    <property type="entry name" value="S-ADENOSYL-METHYLTRANSFERASE MRAW"/>
    <property type="match status" value="1"/>
</dbReference>
<dbReference type="Pfam" id="PF01795">
    <property type="entry name" value="Methyltransf_5"/>
    <property type="match status" value="1"/>
</dbReference>
<dbReference type="PIRSF" id="PIRSF004486">
    <property type="entry name" value="MraW"/>
    <property type="match status" value="1"/>
</dbReference>
<dbReference type="SUPFAM" id="SSF81799">
    <property type="entry name" value="Putative methyltransferase TM0872, insert domain"/>
    <property type="match status" value="1"/>
</dbReference>
<dbReference type="SUPFAM" id="SSF53335">
    <property type="entry name" value="S-adenosyl-L-methionine-dependent methyltransferases"/>
    <property type="match status" value="1"/>
</dbReference>
<protein>
    <recommendedName>
        <fullName evidence="1">Ribosomal RNA small subunit methyltransferase H</fullName>
        <ecNumber evidence="1">2.1.1.199</ecNumber>
    </recommendedName>
    <alternativeName>
        <fullName evidence="1">16S rRNA m(4)C1402 methyltransferase</fullName>
    </alternativeName>
    <alternativeName>
        <fullName evidence="1">rRNA (cytosine-N(4)-)-methyltransferase RsmH</fullName>
    </alternativeName>
</protein>
<proteinExistence type="inferred from homology"/>
<reference key="1">
    <citation type="journal article" date="2009" name="Appl. Environ. Microbiol.">
        <title>Three genomes from the phylum Acidobacteria provide insight into the lifestyles of these microorganisms in soils.</title>
        <authorList>
            <person name="Ward N.L."/>
            <person name="Challacombe J.F."/>
            <person name="Janssen P.H."/>
            <person name="Henrissat B."/>
            <person name="Coutinho P.M."/>
            <person name="Wu M."/>
            <person name="Xie G."/>
            <person name="Haft D.H."/>
            <person name="Sait M."/>
            <person name="Badger J."/>
            <person name="Barabote R.D."/>
            <person name="Bradley B."/>
            <person name="Brettin T.S."/>
            <person name="Brinkac L.M."/>
            <person name="Bruce D."/>
            <person name="Creasy T."/>
            <person name="Daugherty S.C."/>
            <person name="Davidsen T.M."/>
            <person name="DeBoy R.T."/>
            <person name="Detter J.C."/>
            <person name="Dodson R.J."/>
            <person name="Durkin A.S."/>
            <person name="Ganapathy A."/>
            <person name="Gwinn-Giglio M."/>
            <person name="Han C.S."/>
            <person name="Khouri H."/>
            <person name="Kiss H."/>
            <person name="Kothari S.P."/>
            <person name="Madupu R."/>
            <person name="Nelson K.E."/>
            <person name="Nelson W.C."/>
            <person name="Paulsen I."/>
            <person name="Penn K."/>
            <person name="Ren Q."/>
            <person name="Rosovitz M.J."/>
            <person name="Selengut J.D."/>
            <person name="Shrivastava S."/>
            <person name="Sullivan S.A."/>
            <person name="Tapia R."/>
            <person name="Thompson L.S."/>
            <person name="Watkins K.L."/>
            <person name="Yang Q."/>
            <person name="Yu C."/>
            <person name="Zafar N."/>
            <person name="Zhou L."/>
            <person name="Kuske C.R."/>
        </authorList>
    </citation>
    <scope>NUCLEOTIDE SEQUENCE [LARGE SCALE GENOMIC DNA]</scope>
    <source>
        <strain>Ellin345</strain>
    </source>
</reference>
<gene>
    <name evidence="1" type="primary">rsmH</name>
    <name type="synonym">mraW</name>
    <name type="ordered locus">Acid345_3638</name>
</gene>
<name>RSMH_KORVE</name>
<sequence>MDSEDNSAPRGERGIEQFSHVSVLSQEAIDFLAIRRGGTYLDATLGLGGHSYEIAKRLGAQGHLIALDKDTNALEMARRRLEQVPDDLKEDWPQITLLHASFAEMKQHIASKSLDGVLADLGISSMQLQDAGRGFSFQAEGPLDMRMNPHGDLTAEQVVNHTSERELADVIYEFGEERRSRRIARAICRARPIRTTAHLAQVISVAARPMNQAERRIHPATKTFQALRIFVNHELDDLKELLASVPSRLVPRGRLVVISFHSLEDRIVKDSLRDGASAGKYELLTKKPVTATEEEIDRNPRSRSAKLRAAARK</sequence>
<accession>Q1IKG1</accession>
<organism>
    <name type="scientific">Koribacter versatilis (strain Ellin345)</name>
    <dbReference type="NCBI Taxonomy" id="204669"/>
    <lineage>
        <taxon>Bacteria</taxon>
        <taxon>Pseudomonadati</taxon>
        <taxon>Acidobacteriota</taxon>
        <taxon>Terriglobia</taxon>
        <taxon>Terriglobales</taxon>
        <taxon>Candidatus Korobacteraceae</taxon>
        <taxon>Candidatus Korobacter</taxon>
    </lineage>
</organism>
<comment type="function">
    <text evidence="1">Specifically methylates the N4 position of cytidine in position 1402 (C1402) of 16S rRNA.</text>
</comment>
<comment type="catalytic activity">
    <reaction evidence="1">
        <text>cytidine(1402) in 16S rRNA + S-adenosyl-L-methionine = N(4)-methylcytidine(1402) in 16S rRNA + S-adenosyl-L-homocysteine + H(+)</text>
        <dbReference type="Rhea" id="RHEA:42928"/>
        <dbReference type="Rhea" id="RHEA-COMP:10286"/>
        <dbReference type="Rhea" id="RHEA-COMP:10287"/>
        <dbReference type="ChEBI" id="CHEBI:15378"/>
        <dbReference type="ChEBI" id="CHEBI:57856"/>
        <dbReference type="ChEBI" id="CHEBI:59789"/>
        <dbReference type="ChEBI" id="CHEBI:74506"/>
        <dbReference type="ChEBI" id="CHEBI:82748"/>
        <dbReference type="EC" id="2.1.1.199"/>
    </reaction>
</comment>
<comment type="subcellular location">
    <subcellularLocation>
        <location evidence="1">Cytoplasm</location>
    </subcellularLocation>
</comment>
<comment type="similarity">
    <text evidence="1">Belongs to the methyltransferase superfamily. RsmH family.</text>
</comment>
<evidence type="ECO:0000255" key="1">
    <source>
        <dbReference type="HAMAP-Rule" id="MF_01007"/>
    </source>
</evidence>
<evidence type="ECO:0000256" key="2">
    <source>
        <dbReference type="SAM" id="MobiDB-lite"/>
    </source>
</evidence>
<keyword id="KW-0963">Cytoplasm</keyword>
<keyword id="KW-0489">Methyltransferase</keyword>
<keyword id="KW-1185">Reference proteome</keyword>
<keyword id="KW-0698">rRNA processing</keyword>
<keyword id="KW-0949">S-adenosyl-L-methionine</keyword>
<keyword id="KW-0808">Transferase</keyword>